<organism>
    <name type="scientific">Staphylococcus haemolyticus (strain JCSC1435)</name>
    <dbReference type="NCBI Taxonomy" id="279808"/>
    <lineage>
        <taxon>Bacteria</taxon>
        <taxon>Bacillati</taxon>
        <taxon>Bacillota</taxon>
        <taxon>Bacilli</taxon>
        <taxon>Bacillales</taxon>
        <taxon>Staphylococcaceae</taxon>
        <taxon>Staphylococcus</taxon>
    </lineage>
</organism>
<sequence>MDKHGIIESLLYTAGDEGLDEKQLLEILEINQAKLSELISSYTSSGLIIQKFGSTYILTSKKEASPYIEQLIEQKSNMKLSQAAMETLSIIAYNQPLSRSDIELIRGINSDGAVRTLIARGLIEAKDVENSRSHALQTTDLFLNVFGIEKIEDLPTTEEDEEEMDDFFSNLVNQKGDTK</sequence>
<dbReference type="EMBL" id="AP006716">
    <property type="protein sequence ID" value="BAE04731.1"/>
    <property type="molecule type" value="Genomic_DNA"/>
</dbReference>
<dbReference type="RefSeq" id="WP_011275718.1">
    <property type="nucleotide sequence ID" value="NC_007168.1"/>
</dbReference>
<dbReference type="SMR" id="Q4L6J4"/>
<dbReference type="GeneID" id="93780820"/>
<dbReference type="KEGG" id="sha:SH1422"/>
<dbReference type="eggNOG" id="COG1386">
    <property type="taxonomic scope" value="Bacteria"/>
</dbReference>
<dbReference type="HOGENOM" id="CLU_045647_5_3_9"/>
<dbReference type="OrthoDB" id="9806226at2"/>
<dbReference type="Proteomes" id="UP000000543">
    <property type="component" value="Chromosome"/>
</dbReference>
<dbReference type="GO" id="GO:0005737">
    <property type="term" value="C:cytoplasm"/>
    <property type="evidence" value="ECO:0007669"/>
    <property type="project" value="UniProtKB-SubCell"/>
</dbReference>
<dbReference type="GO" id="GO:0051301">
    <property type="term" value="P:cell division"/>
    <property type="evidence" value="ECO:0007669"/>
    <property type="project" value="UniProtKB-KW"/>
</dbReference>
<dbReference type="GO" id="GO:0051304">
    <property type="term" value="P:chromosome separation"/>
    <property type="evidence" value="ECO:0007669"/>
    <property type="project" value="InterPro"/>
</dbReference>
<dbReference type="GO" id="GO:0006260">
    <property type="term" value="P:DNA replication"/>
    <property type="evidence" value="ECO:0007669"/>
    <property type="project" value="UniProtKB-UniRule"/>
</dbReference>
<dbReference type="Gene3D" id="1.10.10.10">
    <property type="entry name" value="Winged helix-like DNA-binding domain superfamily/Winged helix DNA-binding domain"/>
    <property type="match status" value="2"/>
</dbReference>
<dbReference type="HAMAP" id="MF_01804">
    <property type="entry name" value="ScpB"/>
    <property type="match status" value="1"/>
</dbReference>
<dbReference type="InterPro" id="IPR005234">
    <property type="entry name" value="ScpB_csome_segregation"/>
</dbReference>
<dbReference type="InterPro" id="IPR036388">
    <property type="entry name" value="WH-like_DNA-bd_sf"/>
</dbReference>
<dbReference type="InterPro" id="IPR036390">
    <property type="entry name" value="WH_DNA-bd_sf"/>
</dbReference>
<dbReference type="NCBIfam" id="TIGR00281">
    <property type="entry name" value="SMC-Scp complex subunit ScpB"/>
    <property type="match status" value="1"/>
</dbReference>
<dbReference type="PANTHER" id="PTHR34298">
    <property type="entry name" value="SEGREGATION AND CONDENSATION PROTEIN B"/>
    <property type="match status" value="1"/>
</dbReference>
<dbReference type="PANTHER" id="PTHR34298:SF2">
    <property type="entry name" value="SEGREGATION AND CONDENSATION PROTEIN B"/>
    <property type="match status" value="1"/>
</dbReference>
<dbReference type="Pfam" id="PF04079">
    <property type="entry name" value="SMC_ScpB"/>
    <property type="match status" value="1"/>
</dbReference>
<dbReference type="PIRSF" id="PIRSF019345">
    <property type="entry name" value="ScpB"/>
    <property type="match status" value="1"/>
</dbReference>
<dbReference type="SUPFAM" id="SSF46785">
    <property type="entry name" value="Winged helix' DNA-binding domain"/>
    <property type="match status" value="2"/>
</dbReference>
<feature type="chain" id="PRO_0000211153" description="Segregation and condensation protein B">
    <location>
        <begin position="1"/>
        <end position="179"/>
    </location>
</feature>
<accession>Q4L6J4</accession>
<keyword id="KW-0131">Cell cycle</keyword>
<keyword id="KW-0132">Cell division</keyword>
<keyword id="KW-0159">Chromosome partition</keyword>
<keyword id="KW-0963">Cytoplasm</keyword>
<gene>
    <name evidence="1" type="primary">scpB</name>
    <name type="ordered locus">SH1422</name>
</gene>
<reference key="1">
    <citation type="journal article" date="2005" name="J. Bacteriol.">
        <title>Whole-genome sequencing of Staphylococcus haemolyticus uncovers the extreme plasticity of its genome and the evolution of human-colonizing staphylococcal species.</title>
        <authorList>
            <person name="Takeuchi F."/>
            <person name="Watanabe S."/>
            <person name="Baba T."/>
            <person name="Yuzawa H."/>
            <person name="Ito T."/>
            <person name="Morimoto Y."/>
            <person name="Kuroda M."/>
            <person name="Cui L."/>
            <person name="Takahashi M."/>
            <person name="Ankai A."/>
            <person name="Baba S."/>
            <person name="Fukui S."/>
            <person name="Lee J.C."/>
            <person name="Hiramatsu K."/>
        </authorList>
    </citation>
    <scope>NUCLEOTIDE SEQUENCE [LARGE SCALE GENOMIC DNA]</scope>
    <source>
        <strain>JCSC1435</strain>
    </source>
</reference>
<proteinExistence type="inferred from homology"/>
<name>SCPB_STAHJ</name>
<protein>
    <recommendedName>
        <fullName evidence="1">Segregation and condensation protein B</fullName>
    </recommendedName>
</protein>
<comment type="function">
    <text evidence="1">Participates in chromosomal partition during cell division. May act via the formation of a condensin-like complex containing Smc and ScpA that pull DNA away from mid-cell into both cell halves.</text>
</comment>
<comment type="subunit">
    <text evidence="1">Homodimer. Homodimerization may be required to stabilize the binding of ScpA to the Smc head domains. Component of a cohesin-like complex composed of ScpA, ScpB and the Smc homodimer, in which ScpA and ScpB bind to the head domain of Smc. The presence of the three proteins is required for the association of the complex with DNA.</text>
</comment>
<comment type="subcellular location">
    <subcellularLocation>
        <location evidence="1">Cytoplasm</location>
    </subcellularLocation>
    <text evidence="1">Associated with two foci at the outer edges of the nucleoid region in young cells, and at four foci within both cell halves in older cells.</text>
</comment>
<comment type="similarity">
    <text evidence="1">Belongs to the ScpB family.</text>
</comment>
<evidence type="ECO:0000255" key="1">
    <source>
        <dbReference type="HAMAP-Rule" id="MF_01804"/>
    </source>
</evidence>